<protein>
    <recommendedName>
        <fullName evidence="1">Proteasome subunit beta 2</fullName>
        <ecNumber evidence="1">3.4.25.1</ecNumber>
    </recommendedName>
    <alternativeName>
        <fullName evidence="1">20S proteasome beta subunit 2</fullName>
    </alternativeName>
    <alternativeName>
        <fullName evidence="1">Proteasome core protein PsmB 2</fullName>
    </alternativeName>
</protein>
<keyword id="KW-0068">Autocatalytic cleavage</keyword>
<keyword id="KW-0963">Cytoplasm</keyword>
<keyword id="KW-0378">Hydrolase</keyword>
<keyword id="KW-0645">Protease</keyword>
<keyword id="KW-0647">Proteasome</keyword>
<keyword id="KW-1185">Reference proteome</keyword>
<keyword id="KW-0888">Threonine protease</keyword>
<keyword id="KW-0865">Zymogen</keyword>
<organism>
    <name type="scientific">Aeropyrum pernix (strain ATCC 700893 / DSM 11879 / JCM 9820 / NBRC 100138 / K1)</name>
    <dbReference type="NCBI Taxonomy" id="272557"/>
    <lineage>
        <taxon>Archaea</taxon>
        <taxon>Thermoproteota</taxon>
        <taxon>Thermoprotei</taxon>
        <taxon>Desulfurococcales</taxon>
        <taxon>Desulfurococcaceae</taxon>
        <taxon>Aeropyrum</taxon>
    </lineage>
</organism>
<reference key="1">
    <citation type="journal article" date="1999" name="DNA Res.">
        <title>Complete genome sequence of an aerobic hyper-thermophilic crenarchaeon, Aeropyrum pernix K1.</title>
        <authorList>
            <person name="Kawarabayasi Y."/>
            <person name="Hino Y."/>
            <person name="Horikawa H."/>
            <person name="Yamazaki S."/>
            <person name="Haikawa Y."/>
            <person name="Jin-no K."/>
            <person name="Takahashi M."/>
            <person name="Sekine M."/>
            <person name="Baba S."/>
            <person name="Ankai A."/>
            <person name="Kosugi H."/>
            <person name="Hosoyama A."/>
            <person name="Fukui S."/>
            <person name="Nagai Y."/>
            <person name="Nishijima K."/>
            <person name="Nakazawa H."/>
            <person name="Takamiya M."/>
            <person name="Masuda S."/>
            <person name="Funahashi T."/>
            <person name="Tanaka T."/>
            <person name="Kudoh Y."/>
            <person name="Yamazaki J."/>
            <person name="Kushida N."/>
            <person name="Oguchi A."/>
            <person name="Aoki K."/>
            <person name="Kubota K."/>
            <person name="Nakamura Y."/>
            <person name="Nomura N."/>
            <person name="Sako Y."/>
            <person name="Kikuchi H."/>
        </authorList>
    </citation>
    <scope>NUCLEOTIDE SEQUENCE [LARGE SCALE GENOMIC DNA]</scope>
    <source>
        <strain>ATCC 700893 / DSM 11879 / JCM 9820 / NBRC 100138 / K1</strain>
    </source>
</reference>
<dbReference type="EC" id="3.4.25.1" evidence="1"/>
<dbReference type="EMBL" id="BA000002">
    <property type="protein sequence ID" value="BAA79486.2"/>
    <property type="molecule type" value="Genomic_DNA"/>
</dbReference>
<dbReference type="PIR" id="B72749">
    <property type="entry name" value="B72749"/>
</dbReference>
<dbReference type="RefSeq" id="WP_010865808.1">
    <property type="nucleotide sequence ID" value="NC_000854.2"/>
</dbReference>
<dbReference type="SMR" id="Q9YER0"/>
<dbReference type="STRING" id="272557.APE_0521.1"/>
<dbReference type="MEROPS" id="T01.002"/>
<dbReference type="EnsemblBacteria" id="BAA79486">
    <property type="protein sequence ID" value="BAA79486"/>
    <property type="gene ID" value="APE_0521.1"/>
</dbReference>
<dbReference type="GeneID" id="1444696"/>
<dbReference type="KEGG" id="ape:APE_0521.1"/>
<dbReference type="PATRIC" id="fig|272557.25.peg.392"/>
<dbReference type="eggNOG" id="arCOG00970">
    <property type="taxonomic scope" value="Archaea"/>
</dbReference>
<dbReference type="Proteomes" id="UP000002518">
    <property type="component" value="Chromosome"/>
</dbReference>
<dbReference type="GO" id="GO:0005737">
    <property type="term" value="C:cytoplasm"/>
    <property type="evidence" value="ECO:0007669"/>
    <property type="project" value="UniProtKB-SubCell"/>
</dbReference>
<dbReference type="GO" id="GO:0019774">
    <property type="term" value="C:proteasome core complex, beta-subunit complex"/>
    <property type="evidence" value="ECO:0007669"/>
    <property type="project" value="UniProtKB-UniRule"/>
</dbReference>
<dbReference type="GO" id="GO:0004298">
    <property type="term" value="F:threonine-type endopeptidase activity"/>
    <property type="evidence" value="ECO:0007669"/>
    <property type="project" value="UniProtKB-UniRule"/>
</dbReference>
<dbReference type="GO" id="GO:0010498">
    <property type="term" value="P:proteasomal protein catabolic process"/>
    <property type="evidence" value="ECO:0007669"/>
    <property type="project" value="UniProtKB-UniRule"/>
</dbReference>
<dbReference type="CDD" id="cd03764">
    <property type="entry name" value="proteasome_beta_archeal"/>
    <property type="match status" value="1"/>
</dbReference>
<dbReference type="FunFam" id="3.60.20.10:FF:000049">
    <property type="entry name" value="Proteasome subunit beta"/>
    <property type="match status" value="1"/>
</dbReference>
<dbReference type="Gene3D" id="3.60.20.10">
    <property type="entry name" value="Glutamine Phosphoribosylpyrophosphate, subunit 1, domain 1"/>
    <property type="match status" value="1"/>
</dbReference>
<dbReference type="HAMAP" id="MF_02113_A">
    <property type="entry name" value="Proteasome_B_A"/>
    <property type="match status" value="1"/>
</dbReference>
<dbReference type="InterPro" id="IPR029055">
    <property type="entry name" value="Ntn_hydrolases_N"/>
</dbReference>
<dbReference type="InterPro" id="IPR019983">
    <property type="entry name" value="Pept_T1A_Psome_bsu_arc"/>
</dbReference>
<dbReference type="InterPro" id="IPR000243">
    <property type="entry name" value="Pept_T1A_subB"/>
</dbReference>
<dbReference type="InterPro" id="IPR001353">
    <property type="entry name" value="Proteasome_sua/b"/>
</dbReference>
<dbReference type="InterPro" id="IPR023333">
    <property type="entry name" value="Proteasome_suB-type"/>
</dbReference>
<dbReference type="NCBIfam" id="TIGR03634">
    <property type="entry name" value="arc_protsome_B"/>
    <property type="match status" value="1"/>
</dbReference>
<dbReference type="PANTHER" id="PTHR32194:SF0">
    <property type="entry name" value="ATP-DEPENDENT PROTEASE SUBUNIT HSLV"/>
    <property type="match status" value="1"/>
</dbReference>
<dbReference type="PANTHER" id="PTHR32194">
    <property type="entry name" value="METALLOPROTEASE TLDD"/>
    <property type="match status" value="1"/>
</dbReference>
<dbReference type="Pfam" id="PF00227">
    <property type="entry name" value="Proteasome"/>
    <property type="match status" value="1"/>
</dbReference>
<dbReference type="PRINTS" id="PR00141">
    <property type="entry name" value="PROTEASOME"/>
</dbReference>
<dbReference type="SUPFAM" id="SSF56235">
    <property type="entry name" value="N-terminal nucleophile aminohydrolases (Ntn hydrolases)"/>
    <property type="match status" value="1"/>
</dbReference>
<dbReference type="PROSITE" id="PS51476">
    <property type="entry name" value="PROTEASOME_BETA_2"/>
    <property type="match status" value="1"/>
</dbReference>
<evidence type="ECO:0000255" key="1">
    <source>
        <dbReference type="HAMAP-Rule" id="MF_02113"/>
    </source>
</evidence>
<proteinExistence type="inferred from homology"/>
<gene>
    <name evidence="1" type="primary">psmB2</name>
    <name type="ordered locus">APE_0521.1</name>
</gene>
<feature type="propeptide" id="PRO_0000397274" description="Removed in mature form; by autocatalysis" evidence="1">
    <location>
        <begin position="1"/>
        <end position="25"/>
    </location>
</feature>
<feature type="chain" id="PRO_0000397275" description="Proteasome subunit beta 2">
    <location>
        <begin position="26"/>
        <end position="219"/>
    </location>
</feature>
<feature type="active site" description="Nucleophile" evidence="1">
    <location>
        <position position="26"/>
    </location>
</feature>
<name>PSB2_AERPE</name>
<comment type="function">
    <text evidence="1">Component of the proteasome core, a large protease complex with broad specificity involved in protein degradation.</text>
</comment>
<comment type="catalytic activity">
    <reaction evidence="1">
        <text>Cleavage of peptide bonds with very broad specificity.</text>
        <dbReference type="EC" id="3.4.25.1"/>
    </reaction>
</comment>
<comment type="activity regulation">
    <text evidence="1">The formation of the proteasomal ATPase PAN-20S proteasome complex, via the docking of the C-termini of PAN into the intersubunit pockets in the alpha-rings, triggers opening of the gate for substrate entry. Interconversion between the open-gate and close-gate conformations leads to a dynamic regulation of the 20S proteasome proteolysis activity.</text>
</comment>
<comment type="subunit">
    <text evidence="1">The 20S proteasome core is composed of 14 alpha and 14 beta subunits that assemble into four stacked heptameric rings, resulting in a barrel-shaped structure. The two inner rings, each composed of seven catalytic beta subunits, are sandwiched by two outer rings, each composed of seven alpha subunits. The catalytic chamber with the active sites is on the inside of the barrel. Has a gated structure, the ends of the cylinder being occluded by the N-termini of the alpha-subunits. Is capped at one or both ends by the proteasome regulatory ATPase, PAN.</text>
</comment>
<comment type="subcellular location">
    <subcellularLocation>
        <location evidence="1">Cytoplasm</location>
    </subcellularLocation>
</comment>
<comment type="similarity">
    <text evidence="1">Belongs to the peptidase T1B family.</text>
</comment>
<sequence>MAEWIAGGLEGPAGRGLDERVVRSGTTTVGLIASDHVILAADKRATAGFLIASRRVKKIVMLSNYVAMTVSGLVADAQILSDVLREEIRLYEMTNKVKPSVRFVASLLSNILFSSKFFPYIVQLIVGGYDTQPRLYTLDLFGSITEDKYTATGSGSPIAYGVLEERYREDLSVEEAIKVATTAIRSAVLRDAASGDGADVVVIGPQGYEEKFIPYNSLV</sequence>
<accession>Q9YER0</accession>